<comment type="subcellular location">
    <subcellularLocation>
        <location evidence="1">Cytoplasm</location>
        <location evidence="1">Cytoskeleton</location>
        <location evidence="1">Microtubule organizing center</location>
        <location evidence="1">Centrosome</location>
    </subcellularLocation>
    <subcellularLocation>
        <location evidence="1">Cytoplasm</location>
        <location evidence="1">Cytoskeleton</location>
        <location evidence="1">Spindle pole</location>
    </subcellularLocation>
</comment>
<protein>
    <recommendedName>
        <fullName>Centrosomal protein of 95 kDa</fullName>
        <shortName>Cep95</shortName>
    </recommendedName>
    <alternativeName>
        <fullName>Coiled-coil domain-containing protein 45</fullName>
    </alternativeName>
</protein>
<organism>
    <name type="scientific">Rattus norvegicus</name>
    <name type="common">Rat</name>
    <dbReference type="NCBI Taxonomy" id="10116"/>
    <lineage>
        <taxon>Eukaryota</taxon>
        <taxon>Metazoa</taxon>
        <taxon>Chordata</taxon>
        <taxon>Craniata</taxon>
        <taxon>Vertebrata</taxon>
        <taxon>Euteleostomi</taxon>
        <taxon>Mammalia</taxon>
        <taxon>Eutheria</taxon>
        <taxon>Euarchontoglires</taxon>
        <taxon>Glires</taxon>
        <taxon>Rodentia</taxon>
        <taxon>Myomorpha</taxon>
        <taxon>Muroidea</taxon>
        <taxon>Muridae</taxon>
        <taxon>Murinae</taxon>
        <taxon>Rattus</taxon>
    </lineage>
</organism>
<dbReference type="EMBL" id="BC083896">
    <property type="protein sequence ID" value="AAH83896.1"/>
    <property type="molecule type" value="mRNA"/>
</dbReference>
<dbReference type="RefSeq" id="NP_001013884.1">
    <property type="nucleotide sequence ID" value="NM_001013862.1"/>
</dbReference>
<dbReference type="SMR" id="Q5XI03"/>
<dbReference type="FunCoup" id="Q5XI03">
    <property type="interactions" value="2074"/>
</dbReference>
<dbReference type="CarbonylDB" id="Q5XI03"/>
<dbReference type="iPTMnet" id="Q5XI03"/>
<dbReference type="PhosphoSitePlus" id="Q5XI03"/>
<dbReference type="PaxDb" id="10116-ENSRNOP00000062563"/>
<dbReference type="GeneID" id="287766"/>
<dbReference type="KEGG" id="rno:287766"/>
<dbReference type="UCSC" id="RGD:1309655">
    <property type="organism name" value="rat"/>
</dbReference>
<dbReference type="AGR" id="RGD:1309655"/>
<dbReference type="CTD" id="90799"/>
<dbReference type="RGD" id="1309655">
    <property type="gene designation" value="Cep95"/>
</dbReference>
<dbReference type="VEuPathDB" id="HostDB:ENSRNOG00000014354"/>
<dbReference type="eggNOG" id="ENOG502QTFE">
    <property type="taxonomic scope" value="Eukaryota"/>
</dbReference>
<dbReference type="HOGENOM" id="CLU_018428_1_0_1"/>
<dbReference type="InParanoid" id="Q5XI03"/>
<dbReference type="OrthoDB" id="49946at9989"/>
<dbReference type="PRO" id="PR:Q5XI03"/>
<dbReference type="Proteomes" id="UP000002494">
    <property type="component" value="Chromosome 10"/>
</dbReference>
<dbReference type="Bgee" id="ENSRNOG00000014354">
    <property type="expression patterns" value="Expressed in thymus and 20 other cell types or tissues"/>
</dbReference>
<dbReference type="GO" id="GO:0005813">
    <property type="term" value="C:centrosome"/>
    <property type="evidence" value="ECO:0000250"/>
    <property type="project" value="UniProtKB"/>
</dbReference>
<dbReference type="GO" id="GO:0005737">
    <property type="term" value="C:cytoplasm"/>
    <property type="evidence" value="ECO:0007669"/>
    <property type="project" value="UniProtKB-KW"/>
</dbReference>
<dbReference type="GO" id="GO:0000922">
    <property type="term" value="C:spindle pole"/>
    <property type="evidence" value="ECO:0000250"/>
    <property type="project" value="UniProtKB"/>
</dbReference>
<dbReference type="InterPro" id="IPR026619">
    <property type="entry name" value="CEP95"/>
</dbReference>
<dbReference type="InterPro" id="IPR044039">
    <property type="entry name" value="DUF5745"/>
</dbReference>
<dbReference type="PANTHER" id="PTHR22545">
    <property type="entry name" value="CENTROSOMAL PROTEIN OF 95 KDA"/>
    <property type="match status" value="1"/>
</dbReference>
<dbReference type="PANTHER" id="PTHR22545:SF0">
    <property type="entry name" value="CENTROSOMAL PROTEIN OF 95 KDA"/>
    <property type="match status" value="1"/>
</dbReference>
<dbReference type="Pfam" id="PF19016">
    <property type="entry name" value="DUF5745"/>
    <property type="match status" value="1"/>
</dbReference>
<name>CEP95_RAT</name>
<accession>Q5XI03</accession>
<proteinExistence type="evidence at transcript level"/>
<gene>
    <name type="primary">Cep95</name>
    <name type="synonym">Ccdc45</name>
</gene>
<keyword id="KW-0175">Coiled coil</keyword>
<keyword id="KW-0963">Cytoplasm</keyword>
<keyword id="KW-0206">Cytoskeleton</keyword>
<keyword id="KW-0597">Phosphoprotein</keyword>
<keyword id="KW-1185">Reference proteome</keyword>
<reference key="1">
    <citation type="journal article" date="2004" name="Genome Res.">
        <title>The status, quality, and expansion of the NIH full-length cDNA project: the Mammalian Gene Collection (MGC).</title>
        <authorList>
            <consortium name="The MGC Project Team"/>
        </authorList>
    </citation>
    <scope>NUCLEOTIDE SEQUENCE [LARGE SCALE MRNA]</scope>
    <source>
        <tissue>Testis</tissue>
    </source>
</reference>
<evidence type="ECO:0000250" key="1"/>
<evidence type="ECO:0000250" key="2">
    <source>
        <dbReference type="UniProtKB" id="Q96GE4"/>
    </source>
</evidence>
<evidence type="ECO:0000255" key="3"/>
<evidence type="ECO:0000256" key="4">
    <source>
        <dbReference type="SAM" id="MobiDB-lite"/>
    </source>
</evidence>
<feature type="chain" id="PRO_0000234507" description="Centrosomal protein of 95 kDa">
    <location>
        <begin position="1"/>
        <end position="821"/>
    </location>
</feature>
<feature type="region of interest" description="Disordered" evidence="4">
    <location>
        <begin position="310"/>
        <end position="354"/>
    </location>
</feature>
<feature type="region of interest" description="Disordered" evidence="4">
    <location>
        <begin position="390"/>
        <end position="474"/>
    </location>
</feature>
<feature type="region of interest" description="Disordered" evidence="4">
    <location>
        <begin position="514"/>
        <end position="550"/>
    </location>
</feature>
<feature type="coiled-coil region" evidence="3">
    <location>
        <begin position="578"/>
        <end position="627"/>
    </location>
</feature>
<feature type="coiled-coil region" evidence="3">
    <location>
        <begin position="695"/>
        <end position="789"/>
    </location>
</feature>
<feature type="compositionally biased region" description="Basic and acidic residues" evidence="4">
    <location>
        <begin position="325"/>
        <end position="340"/>
    </location>
</feature>
<feature type="compositionally biased region" description="Basic and acidic residues" evidence="4">
    <location>
        <begin position="390"/>
        <end position="410"/>
    </location>
</feature>
<feature type="compositionally biased region" description="Basic residues" evidence="4">
    <location>
        <begin position="427"/>
        <end position="441"/>
    </location>
</feature>
<feature type="modified residue" description="Phosphoserine" evidence="2">
    <location>
        <position position="445"/>
    </location>
</feature>
<feature type="modified residue" description="Phosphoserine" evidence="2">
    <location>
        <position position="447"/>
    </location>
</feature>
<feature type="modified residue" description="Phosphoserine" evidence="2">
    <location>
        <position position="449"/>
    </location>
</feature>
<sequence length="821" mass="94508">MASSEAEWVTIANNLLFKCHIHLRIHKLQDCDANVFIALYQSILGEKVPDLIVIPRSQEDNAHNVQAVIDSLALDYLQVSLSHITGENIVKGDKGSIKNLLEIFDGLLEYLTEHISESSHNRSASEQFCRDSRGEEPVEELESAKESSWRKVPFMRCSFSPDALGPTWDEEEAESTGEIIRLGDTAHTFSLRSNGAQNSMNFWSRKASTSGIRPPEEMLNPGLSSFLFKNGPTCEEEEAPPIHMATSARKLGEPIRAAIPLHPPYHPPEPRAPCPIGKEYLCSGHYLSTPASGEHRAPSVEPGDVFLTSTLCKDDDQETDLDLTESSKTRRLSKGERSENRAVAPSEYPPFPQKARKRLTEQELHAMSEKLSQRLSELDWMLKTALGDRATGEAHGKDGGAGDEEAHSANEEMLSQHSDSVMEYGPRKPRPGFSMHRKAPYRSHSLSPSSVNKHRQSEKERKKQHKSKGTDTHHFQAKALTEAFERELRKNKVQENVGLRGIREEEEETEKSYKEAFAKGTTKQSQVQKIYSRKTAAPTPKGGLLKSSKASPMKVNEHSLLSLMLEQFPFLYVSDPTLTKMWKQQMAQVEQLRREAQRENRSKKKLQDEIEEALRRHDLLTALVKKEYDHNKRLQDFKDRIHKQRLTQSKIKENRHQSVRARKYYDDYRVQLRAKMMKMRTREEMIFKKLFEEGLQIQKQRLRDLRNYAKEKRSEEKRQHQNELDSMENYYKDQFSLLAEAISQGRQELKARQRSQAQTLHKVKRELRAKMEKEIEQLQHLITQSDDDAFFRELEAERFKARLQLASFQYSKNPFPRGQTP</sequence>